<organism>
    <name type="scientific">Bordetella bronchiseptica (strain ATCC BAA-588 / NCTC 13252 / RB50)</name>
    <name type="common">Alcaligenes bronchisepticus</name>
    <dbReference type="NCBI Taxonomy" id="257310"/>
    <lineage>
        <taxon>Bacteria</taxon>
        <taxon>Pseudomonadati</taxon>
        <taxon>Pseudomonadota</taxon>
        <taxon>Betaproteobacteria</taxon>
        <taxon>Burkholderiales</taxon>
        <taxon>Alcaligenaceae</taxon>
        <taxon>Bordetella</taxon>
    </lineage>
</organism>
<name>Y1538_BORBR</name>
<gene>
    <name type="ordered locus">BB1538</name>
</gene>
<feature type="chain" id="PRO_0000208758" description="Uncharacterized transporter BB1538">
    <location>
        <begin position="1"/>
        <end position="571"/>
    </location>
</feature>
<feature type="transmembrane region" description="Helical" evidence="1">
    <location>
        <begin position="10"/>
        <end position="29"/>
    </location>
</feature>
<feature type="transmembrane region" description="Helical" evidence="1">
    <location>
        <begin position="36"/>
        <end position="55"/>
    </location>
</feature>
<feature type="transmembrane region" description="Helical" evidence="1">
    <location>
        <begin position="65"/>
        <end position="87"/>
    </location>
</feature>
<feature type="transmembrane region" description="Helical" evidence="1">
    <location>
        <begin position="96"/>
        <end position="118"/>
    </location>
</feature>
<feature type="transmembrane region" description="Helical" evidence="1">
    <location>
        <begin position="166"/>
        <end position="188"/>
    </location>
</feature>
<feature type="transmembrane region" description="Helical" evidence="1">
    <location>
        <begin position="388"/>
        <end position="406"/>
    </location>
</feature>
<feature type="transmembrane region" description="Helical" evidence="1">
    <location>
        <begin position="411"/>
        <end position="433"/>
    </location>
</feature>
<feature type="transmembrane region" description="Helical" evidence="1">
    <location>
        <begin position="446"/>
        <end position="465"/>
    </location>
</feature>
<feature type="transmembrane region" description="Helical" evidence="1">
    <location>
        <begin position="480"/>
        <end position="502"/>
    </location>
</feature>
<feature type="transmembrane region" description="Helical" evidence="1">
    <location>
        <begin position="509"/>
        <end position="531"/>
    </location>
</feature>
<feature type="transmembrane region" description="Helical" evidence="1">
    <location>
        <begin position="546"/>
        <end position="568"/>
    </location>
</feature>
<feature type="domain" description="RCK C-terminal" evidence="2">
    <location>
        <begin position="294"/>
        <end position="378"/>
    </location>
</feature>
<accession>Q7WM55</accession>
<evidence type="ECO:0000255" key="1"/>
<evidence type="ECO:0000255" key="2">
    <source>
        <dbReference type="PROSITE-ProRule" id="PRU00544"/>
    </source>
</evidence>
<evidence type="ECO:0000305" key="3"/>
<reference key="1">
    <citation type="journal article" date="2003" name="Nat. Genet.">
        <title>Comparative analysis of the genome sequences of Bordetella pertussis, Bordetella parapertussis and Bordetella bronchiseptica.</title>
        <authorList>
            <person name="Parkhill J."/>
            <person name="Sebaihia M."/>
            <person name="Preston A."/>
            <person name="Murphy L.D."/>
            <person name="Thomson N.R."/>
            <person name="Harris D.E."/>
            <person name="Holden M.T.G."/>
            <person name="Churcher C.M."/>
            <person name="Bentley S.D."/>
            <person name="Mungall K.L."/>
            <person name="Cerdeno-Tarraga A.-M."/>
            <person name="Temple L."/>
            <person name="James K.D."/>
            <person name="Harris B."/>
            <person name="Quail M.A."/>
            <person name="Achtman M."/>
            <person name="Atkin R."/>
            <person name="Baker S."/>
            <person name="Basham D."/>
            <person name="Bason N."/>
            <person name="Cherevach I."/>
            <person name="Chillingworth T."/>
            <person name="Collins M."/>
            <person name="Cronin A."/>
            <person name="Davis P."/>
            <person name="Doggett J."/>
            <person name="Feltwell T."/>
            <person name="Goble A."/>
            <person name="Hamlin N."/>
            <person name="Hauser H."/>
            <person name="Holroyd S."/>
            <person name="Jagels K."/>
            <person name="Leather S."/>
            <person name="Moule S."/>
            <person name="Norberczak H."/>
            <person name="O'Neil S."/>
            <person name="Ormond D."/>
            <person name="Price C."/>
            <person name="Rabbinowitsch E."/>
            <person name="Rutter S."/>
            <person name="Sanders M."/>
            <person name="Saunders D."/>
            <person name="Seeger K."/>
            <person name="Sharp S."/>
            <person name="Simmonds M."/>
            <person name="Skelton J."/>
            <person name="Squares R."/>
            <person name="Squares S."/>
            <person name="Stevens K."/>
            <person name="Unwin L."/>
            <person name="Whitehead S."/>
            <person name="Barrell B.G."/>
            <person name="Maskell D.J."/>
        </authorList>
    </citation>
    <scope>NUCLEOTIDE SEQUENCE [LARGE SCALE GENOMIC DNA]</scope>
    <source>
        <strain>ATCC BAA-588 / NCTC 13252 / RB50</strain>
    </source>
</reference>
<sequence length="571" mass="59891">MTIEALADVVRLHPELALFAAIVFGHFIGKIEIRKVSLGTVVGTLIAGMILGLLFEPEIPDLLKWAFFDLFLFAVGYSAGPQFFASLKREALPQMALAVVVSCTGLAAAIAMVALFRFDPGLSAGLVSGSMTQSAALGSALSAIAAMDVDEATRALLTAHAPLADATTYIFGEVGLILFVTVVAPRLLKVDLRQVAREAEAELQARTDEDDAALWDQAPLSLRTYRLENAELDQRTVHEFERRYAAGRLTVTGIRRGDQLLRDVGADARLALGDIVLVASRRAGVVGAALEVGTEVDDQELLSEPMVRASIVLTRREMAGKTLGELARGAARGLFLDSLHRGESTLPRAMGTRVQRGDVFKLTGSRAAIATAARNLGFIEHDQGRTDLVYLAGGVVVGILFGLLQVRLTGVPLGLGTSGGVLVVGLVAGWLYSRYPVVGHIPEPALRLLSDVGLIVFIAAIGLAAGPHAVQAIHEGGIALFAKLVGAGVVVTLAGPIAGLLLGHYVLKLPPIALLPGIAGAQTTVATLNALKERGGSDVYAIGFTVPFAVSNVLITLWGPVIVACAVALSR</sequence>
<dbReference type="EMBL" id="BX640441">
    <property type="protein sequence ID" value="CAE32035.1"/>
    <property type="molecule type" value="Genomic_DNA"/>
</dbReference>
<dbReference type="RefSeq" id="WP_010926187.1">
    <property type="nucleotide sequence ID" value="NC_002927.3"/>
</dbReference>
<dbReference type="SMR" id="Q7WM55"/>
<dbReference type="KEGG" id="bbr:BB1538"/>
<dbReference type="eggNOG" id="COG2985">
    <property type="taxonomic scope" value="Bacteria"/>
</dbReference>
<dbReference type="HOGENOM" id="CLU_035023_2_2_4"/>
<dbReference type="Proteomes" id="UP000001027">
    <property type="component" value="Chromosome"/>
</dbReference>
<dbReference type="GO" id="GO:0005886">
    <property type="term" value="C:plasma membrane"/>
    <property type="evidence" value="ECO:0007669"/>
    <property type="project" value="UniProtKB-SubCell"/>
</dbReference>
<dbReference type="GO" id="GO:0008324">
    <property type="term" value="F:monoatomic cation transmembrane transporter activity"/>
    <property type="evidence" value="ECO:0007669"/>
    <property type="project" value="InterPro"/>
</dbReference>
<dbReference type="GO" id="GO:0006813">
    <property type="term" value="P:potassium ion transport"/>
    <property type="evidence" value="ECO:0007669"/>
    <property type="project" value="InterPro"/>
</dbReference>
<dbReference type="InterPro" id="IPR050144">
    <property type="entry name" value="AAE_transporter"/>
</dbReference>
<dbReference type="InterPro" id="IPR006037">
    <property type="entry name" value="RCK_C"/>
</dbReference>
<dbReference type="InterPro" id="IPR036721">
    <property type="entry name" value="RCK_C_sf"/>
</dbReference>
<dbReference type="InterPro" id="IPR006512">
    <property type="entry name" value="YidE_YbjL"/>
</dbReference>
<dbReference type="NCBIfam" id="TIGR01625">
    <property type="entry name" value="YidE_YbjL_dupl"/>
    <property type="match status" value="1"/>
</dbReference>
<dbReference type="PANTHER" id="PTHR30445:SF9">
    <property type="match status" value="1"/>
</dbReference>
<dbReference type="PANTHER" id="PTHR30445">
    <property type="entry name" value="K(+)_H(+) ANTIPORTER SUBUNIT KHTT"/>
    <property type="match status" value="1"/>
</dbReference>
<dbReference type="Pfam" id="PF06826">
    <property type="entry name" value="Asp-Al_Ex"/>
    <property type="match status" value="2"/>
</dbReference>
<dbReference type="SUPFAM" id="SSF116726">
    <property type="entry name" value="TrkA C-terminal domain-like"/>
    <property type="match status" value="2"/>
</dbReference>
<dbReference type="PROSITE" id="PS51202">
    <property type="entry name" value="RCK_C"/>
    <property type="match status" value="1"/>
</dbReference>
<proteinExistence type="inferred from homology"/>
<keyword id="KW-1003">Cell membrane</keyword>
<keyword id="KW-0472">Membrane</keyword>
<keyword id="KW-0812">Transmembrane</keyword>
<keyword id="KW-1133">Transmembrane helix</keyword>
<keyword id="KW-0813">Transport</keyword>
<comment type="subcellular location">
    <subcellularLocation>
        <location evidence="3">Cell membrane</location>
        <topology evidence="3">Multi-pass membrane protein</topology>
    </subcellularLocation>
</comment>
<comment type="similarity">
    <text evidence="3">Belongs to the AAE transporter (TC 2.A.81) family.</text>
</comment>
<protein>
    <recommendedName>
        <fullName>Uncharacterized transporter BB1538</fullName>
    </recommendedName>
</protein>